<dbReference type="EC" id="2.7.1.24" evidence="1"/>
<dbReference type="EMBL" id="BA000028">
    <property type="protein sequence ID" value="BAC14117.1"/>
    <property type="molecule type" value="Genomic_DNA"/>
</dbReference>
<dbReference type="RefSeq" id="WP_011066555.1">
    <property type="nucleotide sequence ID" value="NC_004193.1"/>
</dbReference>
<dbReference type="SMR" id="Q8EPE7"/>
<dbReference type="STRING" id="221109.gene:10734409"/>
<dbReference type="KEGG" id="oih:OB2161"/>
<dbReference type="eggNOG" id="COG0237">
    <property type="taxonomic scope" value="Bacteria"/>
</dbReference>
<dbReference type="HOGENOM" id="CLU_057180_0_0_9"/>
<dbReference type="OrthoDB" id="9812943at2"/>
<dbReference type="PhylomeDB" id="Q8EPE7"/>
<dbReference type="UniPathway" id="UPA00241">
    <property type="reaction ID" value="UER00356"/>
</dbReference>
<dbReference type="Proteomes" id="UP000000822">
    <property type="component" value="Chromosome"/>
</dbReference>
<dbReference type="GO" id="GO:0005737">
    <property type="term" value="C:cytoplasm"/>
    <property type="evidence" value="ECO:0007669"/>
    <property type="project" value="UniProtKB-SubCell"/>
</dbReference>
<dbReference type="GO" id="GO:0005524">
    <property type="term" value="F:ATP binding"/>
    <property type="evidence" value="ECO:0007669"/>
    <property type="project" value="UniProtKB-UniRule"/>
</dbReference>
<dbReference type="GO" id="GO:0004140">
    <property type="term" value="F:dephospho-CoA kinase activity"/>
    <property type="evidence" value="ECO:0007669"/>
    <property type="project" value="UniProtKB-UniRule"/>
</dbReference>
<dbReference type="GO" id="GO:0015937">
    <property type="term" value="P:coenzyme A biosynthetic process"/>
    <property type="evidence" value="ECO:0007669"/>
    <property type="project" value="UniProtKB-UniRule"/>
</dbReference>
<dbReference type="CDD" id="cd02022">
    <property type="entry name" value="DPCK"/>
    <property type="match status" value="1"/>
</dbReference>
<dbReference type="FunFam" id="3.40.50.300:FF:000485">
    <property type="entry name" value="Dephospho-CoA kinase CAB5"/>
    <property type="match status" value="1"/>
</dbReference>
<dbReference type="Gene3D" id="3.40.50.300">
    <property type="entry name" value="P-loop containing nucleotide triphosphate hydrolases"/>
    <property type="match status" value="1"/>
</dbReference>
<dbReference type="HAMAP" id="MF_00376">
    <property type="entry name" value="Dephospho_CoA_kinase"/>
    <property type="match status" value="1"/>
</dbReference>
<dbReference type="InterPro" id="IPR001977">
    <property type="entry name" value="Depp_CoAkinase"/>
</dbReference>
<dbReference type="InterPro" id="IPR027417">
    <property type="entry name" value="P-loop_NTPase"/>
</dbReference>
<dbReference type="NCBIfam" id="TIGR00152">
    <property type="entry name" value="dephospho-CoA kinase"/>
    <property type="match status" value="1"/>
</dbReference>
<dbReference type="PANTHER" id="PTHR10695:SF46">
    <property type="entry name" value="BIFUNCTIONAL COENZYME A SYNTHASE-RELATED"/>
    <property type="match status" value="1"/>
</dbReference>
<dbReference type="PANTHER" id="PTHR10695">
    <property type="entry name" value="DEPHOSPHO-COA KINASE-RELATED"/>
    <property type="match status" value="1"/>
</dbReference>
<dbReference type="Pfam" id="PF01121">
    <property type="entry name" value="CoaE"/>
    <property type="match status" value="1"/>
</dbReference>
<dbReference type="SUPFAM" id="SSF52540">
    <property type="entry name" value="P-loop containing nucleoside triphosphate hydrolases"/>
    <property type="match status" value="1"/>
</dbReference>
<dbReference type="PROSITE" id="PS51219">
    <property type="entry name" value="DPCK"/>
    <property type="match status" value="1"/>
</dbReference>
<gene>
    <name evidence="1" type="primary">coaE</name>
    <name type="ordered locus">OB2161</name>
</gene>
<name>COAE_OCEIH</name>
<reference key="1">
    <citation type="journal article" date="2002" name="Nucleic Acids Res.">
        <title>Genome sequence of Oceanobacillus iheyensis isolated from the Iheya Ridge and its unexpected adaptive capabilities to extreme environments.</title>
        <authorList>
            <person name="Takami H."/>
            <person name="Takaki Y."/>
            <person name="Uchiyama I."/>
        </authorList>
    </citation>
    <scope>NUCLEOTIDE SEQUENCE [LARGE SCALE GENOMIC DNA]</scope>
    <source>
        <strain>DSM 14371 / CIP 107618 / JCM 11309 / KCTC 3954 / HTE831</strain>
    </source>
</reference>
<evidence type="ECO:0000255" key="1">
    <source>
        <dbReference type="HAMAP-Rule" id="MF_00376"/>
    </source>
</evidence>
<protein>
    <recommendedName>
        <fullName evidence="1">Dephospho-CoA kinase</fullName>
        <ecNumber evidence="1">2.7.1.24</ecNumber>
    </recommendedName>
    <alternativeName>
        <fullName evidence="1">Dephosphocoenzyme A kinase</fullName>
    </alternativeName>
</protein>
<sequence>MTLVIGLTGGIASGKSTVSSMLLEKNFPVIDADLIAREVVEPGEKAYDQILEAFGKEIIQNDQKIDRPKLGSIIFTDEDKRKQLNAIVHPAVRNRMLTKRDDYINNDVPCVILDIPLLFESNLGYLVDKTLVVYVDEDIQLTRLMKRNEYSEKEALDRIKAQMSLKEKADLADIVIDNNQSVEETKLQLDNVLQKWNIS</sequence>
<proteinExistence type="inferred from homology"/>
<feature type="chain" id="PRO_0000172970" description="Dephospho-CoA kinase">
    <location>
        <begin position="1"/>
        <end position="199"/>
    </location>
</feature>
<feature type="domain" description="DPCK" evidence="1">
    <location>
        <begin position="4"/>
        <end position="199"/>
    </location>
</feature>
<feature type="binding site" evidence="1">
    <location>
        <begin position="12"/>
        <end position="17"/>
    </location>
    <ligand>
        <name>ATP</name>
        <dbReference type="ChEBI" id="CHEBI:30616"/>
    </ligand>
</feature>
<keyword id="KW-0067">ATP-binding</keyword>
<keyword id="KW-0173">Coenzyme A biosynthesis</keyword>
<keyword id="KW-0963">Cytoplasm</keyword>
<keyword id="KW-0418">Kinase</keyword>
<keyword id="KW-0547">Nucleotide-binding</keyword>
<keyword id="KW-1185">Reference proteome</keyword>
<keyword id="KW-0808">Transferase</keyword>
<accession>Q8EPE7</accession>
<organism>
    <name type="scientific">Oceanobacillus iheyensis (strain DSM 14371 / CIP 107618 / JCM 11309 / KCTC 3954 / HTE831)</name>
    <dbReference type="NCBI Taxonomy" id="221109"/>
    <lineage>
        <taxon>Bacteria</taxon>
        <taxon>Bacillati</taxon>
        <taxon>Bacillota</taxon>
        <taxon>Bacilli</taxon>
        <taxon>Bacillales</taxon>
        <taxon>Bacillaceae</taxon>
        <taxon>Oceanobacillus</taxon>
    </lineage>
</organism>
<comment type="function">
    <text evidence="1">Catalyzes the phosphorylation of the 3'-hydroxyl group of dephosphocoenzyme A to form coenzyme A.</text>
</comment>
<comment type="catalytic activity">
    <reaction evidence="1">
        <text>3'-dephospho-CoA + ATP = ADP + CoA + H(+)</text>
        <dbReference type="Rhea" id="RHEA:18245"/>
        <dbReference type="ChEBI" id="CHEBI:15378"/>
        <dbReference type="ChEBI" id="CHEBI:30616"/>
        <dbReference type="ChEBI" id="CHEBI:57287"/>
        <dbReference type="ChEBI" id="CHEBI:57328"/>
        <dbReference type="ChEBI" id="CHEBI:456216"/>
        <dbReference type="EC" id="2.7.1.24"/>
    </reaction>
</comment>
<comment type="pathway">
    <text evidence="1">Cofactor biosynthesis; coenzyme A biosynthesis; CoA from (R)-pantothenate: step 5/5.</text>
</comment>
<comment type="subcellular location">
    <subcellularLocation>
        <location evidence="1">Cytoplasm</location>
    </subcellularLocation>
</comment>
<comment type="similarity">
    <text evidence="1">Belongs to the CoaE family.</text>
</comment>